<keyword id="KW-0067">ATP-binding</keyword>
<keyword id="KW-0173">Coenzyme A biosynthesis</keyword>
<keyword id="KW-0963">Cytoplasm</keyword>
<keyword id="KW-0460">Magnesium</keyword>
<keyword id="KW-0547">Nucleotide-binding</keyword>
<keyword id="KW-0548">Nucleotidyltransferase</keyword>
<keyword id="KW-0808">Transferase</keyword>
<sequence>MNKSCIYPGTFDPITNGHMDVIKRACRVFDNVIVAVALNESKTPYFCYEERISLAKTATKDIPKVSVIGFDNLLVDLAKSKGINTVVRGLRAVSDFEYELQIGYANASLWSEFETVYFMPSLKNAFISSSIVRSVLKHGGDIGSLVPTNVLEEIKGKLC</sequence>
<dbReference type="EC" id="2.7.7.3" evidence="1"/>
<dbReference type="EMBL" id="CP000487">
    <property type="protein sequence ID" value="ABK83092.1"/>
    <property type="molecule type" value="Genomic_DNA"/>
</dbReference>
<dbReference type="RefSeq" id="WP_011731992.1">
    <property type="nucleotide sequence ID" value="NC_008599.1"/>
</dbReference>
<dbReference type="SMR" id="A0RPD1"/>
<dbReference type="GeneID" id="61064726"/>
<dbReference type="KEGG" id="cff:CFF8240_0892"/>
<dbReference type="PATRIC" id="fig|360106.6.peg.864"/>
<dbReference type="eggNOG" id="COG0669">
    <property type="taxonomic scope" value="Bacteria"/>
</dbReference>
<dbReference type="HOGENOM" id="CLU_100149_0_1_7"/>
<dbReference type="UniPathway" id="UPA00241">
    <property type="reaction ID" value="UER00355"/>
</dbReference>
<dbReference type="Proteomes" id="UP000000760">
    <property type="component" value="Chromosome"/>
</dbReference>
<dbReference type="GO" id="GO:0005737">
    <property type="term" value="C:cytoplasm"/>
    <property type="evidence" value="ECO:0007669"/>
    <property type="project" value="UniProtKB-SubCell"/>
</dbReference>
<dbReference type="GO" id="GO:0005524">
    <property type="term" value="F:ATP binding"/>
    <property type="evidence" value="ECO:0007669"/>
    <property type="project" value="UniProtKB-KW"/>
</dbReference>
<dbReference type="GO" id="GO:0004595">
    <property type="term" value="F:pantetheine-phosphate adenylyltransferase activity"/>
    <property type="evidence" value="ECO:0007669"/>
    <property type="project" value="UniProtKB-UniRule"/>
</dbReference>
<dbReference type="GO" id="GO:0015937">
    <property type="term" value="P:coenzyme A biosynthetic process"/>
    <property type="evidence" value="ECO:0007669"/>
    <property type="project" value="UniProtKB-UniRule"/>
</dbReference>
<dbReference type="CDD" id="cd02163">
    <property type="entry name" value="PPAT"/>
    <property type="match status" value="1"/>
</dbReference>
<dbReference type="Gene3D" id="3.40.50.620">
    <property type="entry name" value="HUPs"/>
    <property type="match status" value="1"/>
</dbReference>
<dbReference type="HAMAP" id="MF_00151">
    <property type="entry name" value="PPAT_bact"/>
    <property type="match status" value="1"/>
</dbReference>
<dbReference type="InterPro" id="IPR004821">
    <property type="entry name" value="Cyt_trans-like"/>
</dbReference>
<dbReference type="InterPro" id="IPR001980">
    <property type="entry name" value="PPAT"/>
</dbReference>
<dbReference type="InterPro" id="IPR014729">
    <property type="entry name" value="Rossmann-like_a/b/a_fold"/>
</dbReference>
<dbReference type="NCBIfam" id="TIGR01510">
    <property type="entry name" value="coaD_prev_kdtB"/>
    <property type="match status" value="1"/>
</dbReference>
<dbReference type="NCBIfam" id="TIGR00125">
    <property type="entry name" value="cyt_tran_rel"/>
    <property type="match status" value="1"/>
</dbReference>
<dbReference type="PANTHER" id="PTHR21342">
    <property type="entry name" value="PHOSPHOPANTETHEINE ADENYLYLTRANSFERASE"/>
    <property type="match status" value="1"/>
</dbReference>
<dbReference type="PANTHER" id="PTHR21342:SF1">
    <property type="entry name" value="PHOSPHOPANTETHEINE ADENYLYLTRANSFERASE"/>
    <property type="match status" value="1"/>
</dbReference>
<dbReference type="Pfam" id="PF01467">
    <property type="entry name" value="CTP_transf_like"/>
    <property type="match status" value="1"/>
</dbReference>
<dbReference type="PRINTS" id="PR01020">
    <property type="entry name" value="LPSBIOSNTHSS"/>
</dbReference>
<dbReference type="SUPFAM" id="SSF52374">
    <property type="entry name" value="Nucleotidylyl transferase"/>
    <property type="match status" value="1"/>
</dbReference>
<organism>
    <name type="scientific">Campylobacter fetus subsp. fetus (strain 82-40)</name>
    <dbReference type="NCBI Taxonomy" id="360106"/>
    <lineage>
        <taxon>Bacteria</taxon>
        <taxon>Pseudomonadati</taxon>
        <taxon>Campylobacterota</taxon>
        <taxon>Epsilonproteobacteria</taxon>
        <taxon>Campylobacterales</taxon>
        <taxon>Campylobacteraceae</taxon>
        <taxon>Campylobacter</taxon>
    </lineage>
</organism>
<name>COAD_CAMFF</name>
<evidence type="ECO:0000255" key="1">
    <source>
        <dbReference type="HAMAP-Rule" id="MF_00151"/>
    </source>
</evidence>
<feature type="chain" id="PRO_1000123273" description="Phosphopantetheine adenylyltransferase">
    <location>
        <begin position="1"/>
        <end position="159"/>
    </location>
</feature>
<feature type="binding site" evidence="1">
    <location>
        <begin position="10"/>
        <end position="11"/>
    </location>
    <ligand>
        <name>ATP</name>
        <dbReference type="ChEBI" id="CHEBI:30616"/>
    </ligand>
</feature>
<feature type="binding site" evidence="1">
    <location>
        <position position="10"/>
    </location>
    <ligand>
        <name>substrate</name>
    </ligand>
</feature>
<feature type="binding site" evidence="1">
    <location>
        <position position="18"/>
    </location>
    <ligand>
        <name>ATP</name>
        <dbReference type="ChEBI" id="CHEBI:30616"/>
    </ligand>
</feature>
<feature type="binding site" evidence="1">
    <location>
        <position position="42"/>
    </location>
    <ligand>
        <name>substrate</name>
    </ligand>
</feature>
<feature type="binding site" evidence="1">
    <location>
        <position position="74"/>
    </location>
    <ligand>
        <name>substrate</name>
    </ligand>
</feature>
<feature type="binding site" evidence="1">
    <location>
        <position position="88"/>
    </location>
    <ligand>
        <name>substrate</name>
    </ligand>
</feature>
<feature type="binding site" evidence="1">
    <location>
        <begin position="89"/>
        <end position="91"/>
    </location>
    <ligand>
        <name>ATP</name>
        <dbReference type="ChEBI" id="CHEBI:30616"/>
    </ligand>
</feature>
<feature type="binding site" evidence="1">
    <location>
        <position position="99"/>
    </location>
    <ligand>
        <name>ATP</name>
        <dbReference type="ChEBI" id="CHEBI:30616"/>
    </ligand>
</feature>
<feature type="binding site" evidence="1">
    <location>
        <begin position="124"/>
        <end position="130"/>
    </location>
    <ligand>
        <name>ATP</name>
        <dbReference type="ChEBI" id="CHEBI:30616"/>
    </ligand>
</feature>
<feature type="site" description="Transition state stabilizer" evidence="1">
    <location>
        <position position="18"/>
    </location>
</feature>
<protein>
    <recommendedName>
        <fullName evidence="1">Phosphopantetheine adenylyltransferase</fullName>
        <ecNumber evidence="1">2.7.7.3</ecNumber>
    </recommendedName>
    <alternativeName>
        <fullName evidence="1">Dephospho-CoA pyrophosphorylase</fullName>
    </alternativeName>
    <alternativeName>
        <fullName evidence="1">Pantetheine-phosphate adenylyltransferase</fullName>
        <shortName evidence="1">PPAT</shortName>
    </alternativeName>
</protein>
<reference key="1">
    <citation type="submission" date="2006-11" db="EMBL/GenBank/DDBJ databases">
        <title>Sequence of Campylobacter fetus subsp. fetus 82-40.</title>
        <authorList>
            <person name="Fouts D.E."/>
            <person name="Nelson K.E."/>
        </authorList>
    </citation>
    <scope>NUCLEOTIDE SEQUENCE [LARGE SCALE GENOMIC DNA]</scope>
    <source>
        <strain>82-40</strain>
    </source>
</reference>
<proteinExistence type="inferred from homology"/>
<gene>
    <name evidence="1" type="primary">coaD</name>
    <name type="ordered locus">CFF8240_0892</name>
</gene>
<accession>A0RPD1</accession>
<comment type="function">
    <text evidence="1">Reversibly transfers an adenylyl group from ATP to 4'-phosphopantetheine, yielding dephospho-CoA (dPCoA) and pyrophosphate.</text>
</comment>
<comment type="catalytic activity">
    <reaction evidence="1">
        <text>(R)-4'-phosphopantetheine + ATP + H(+) = 3'-dephospho-CoA + diphosphate</text>
        <dbReference type="Rhea" id="RHEA:19801"/>
        <dbReference type="ChEBI" id="CHEBI:15378"/>
        <dbReference type="ChEBI" id="CHEBI:30616"/>
        <dbReference type="ChEBI" id="CHEBI:33019"/>
        <dbReference type="ChEBI" id="CHEBI:57328"/>
        <dbReference type="ChEBI" id="CHEBI:61723"/>
        <dbReference type="EC" id="2.7.7.3"/>
    </reaction>
</comment>
<comment type="cofactor">
    <cofactor evidence="1">
        <name>Mg(2+)</name>
        <dbReference type="ChEBI" id="CHEBI:18420"/>
    </cofactor>
</comment>
<comment type="pathway">
    <text evidence="1">Cofactor biosynthesis; coenzyme A biosynthesis; CoA from (R)-pantothenate: step 4/5.</text>
</comment>
<comment type="subunit">
    <text evidence="1">Homohexamer.</text>
</comment>
<comment type="subcellular location">
    <subcellularLocation>
        <location evidence="1">Cytoplasm</location>
    </subcellularLocation>
</comment>
<comment type="similarity">
    <text evidence="1">Belongs to the bacterial CoaD family.</text>
</comment>